<proteinExistence type="evidence at transcript level"/>
<evidence type="ECO:0000255" key="1">
    <source>
        <dbReference type="PROSITE-ProRule" id="PRU00669"/>
    </source>
</evidence>
<evidence type="ECO:0000305" key="2"/>
<feature type="chain" id="PRO_0000284364" description="Myotubularin-related protein 10-B">
    <location>
        <begin position="1"/>
        <end position="764"/>
    </location>
</feature>
<feature type="domain" description="Myotubularin phosphatase" evidence="1">
    <location>
        <begin position="208"/>
        <end position="649"/>
    </location>
</feature>
<sequence length="764" mass="88058">MFSLKQPKPSFKSYLLPLQQEDKLNPETKIKKLKPVLLPGEIVVNEVNFVRKCIASDTSQYDLWGKLVCTNFKISFITENSVPFQRFHYKNLLLGEHDVPLTCIEQIVVVNDTKRKQKILSHNQKLKFNPTELIIYCKDFRILRFRFDEAGPESAKKVCLALAHYSQPTDLQLLFAFEYVAQMYHKLDKVNGIDPGGGGDFCQRTPLFESYSDWDREIKRTGASDWRVCSVNEGYMISTCLPEYFVVPSSLADQDLKQYSHAFVGRRMPLWCWNHSNGSALVRMASIKDLLQQRKIDQRVCSGITRSHPLRSEVYKCDLDDNVPSIQDIQAAFSKLRQLCVNEPFDETEEKWLSSLENTRWLEFVRMFLKQAAELVYMLDFSRRSVVLQEEEGRDLSCVVASLVQLMLDPYFRTIIGFQSLIQKEWVMSAYPFLDRCNHLKRSDKESPLFVLFLDCVWQLLQQYPAAFQFTETYLTVVHDSSRISLFGTFMFNSPHQRVQQSTEFAIGKNIQLGEEKGLKFPSVWDWSLQFSAKDRALFNNPLYIGKSVPCVQNGAVKSFKRTKKNYSSTMRGMPPSVKNGMSIQQEIMPRRNSLILKLKPEILQQVPVIPGNGFEQYFRDWFSKPADLHGVILPCLHGTHIQIWKLCYLRWTPEAQINHGGFITAFHKISLLASEIEVLQSRLRQYRAYPMATVTSPVGEQNQMFFRPDELHSSNGSLDILSSSFPFSPIGNLCRRSILGTPLSKFLNGAKIWLSTETLANED</sequence>
<protein>
    <recommendedName>
        <fullName>Myotubularin-related protein 10-B</fullName>
    </recommendedName>
    <alternativeName>
        <fullName evidence="2">Inactive phosphatidylinositol 3-phosphatase 10-B</fullName>
    </alternativeName>
</protein>
<dbReference type="EMBL" id="BC068794">
    <property type="protein sequence ID" value="AAH68794.1"/>
    <property type="molecule type" value="mRNA"/>
</dbReference>
<dbReference type="EMBL" id="BC084670">
    <property type="protein sequence ID" value="AAH84670.1"/>
    <property type="molecule type" value="mRNA"/>
</dbReference>
<dbReference type="RefSeq" id="NP_001084571.1">
    <property type="nucleotide sequence ID" value="NM_001091102.1"/>
</dbReference>
<dbReference type="SMR" id="Q6NU08"/>
<dbReference type="BioGRID" id="100945">
    <property type="interactions" value="1"/>
</dbReference>
<dbReference type="IntAct" id="Q6NU08">
    <property type="interactions" value="1"/>
</dbReference>
<dbReference type="DNASU" id="414523"/>
<dbReference type="GeneID" id="414523"/>
<dbReference type="KEGG" id="xla:414523"/>
<dbReference type="AGR" id="Xenbase:XB-GENE-6252568"/>
<dbReference type="CTD" id="414523"/>
<dbReference type="Xenbase" id="XB-GENE-6252568">
    <property type="gene designation" value="mtmr10.L"/>
</dbReference>
<dbReference type="OrthoDB" id="271628at2759"/>
<dbReference type="Proteomes" id="UP000186698">
    <property type="component" value="Chromosome 3L"/>
</dbReference>
<dbReference type="Bgee" id="414523">
    <property type="expression patterns" value="Expressed in blastula and 19 other cell types or tissues"/>
</dbReference>
<dbReference type="GO" id="GO:0005737">
    <property type="term" value="C:cytoplasm"/>
    <property type="evidence" value="ECO:0000318"/>
    <property type="project" value="GO_Central"/>
</dbReference>
<dbReference type="GO" id="GO:0016020">
    <property type="term" value="C:membrane"/>
    <property type="evidence" value="ECO:0000318"/>
    <property type="project" value="GO_Central"/>
</dbReference>
<dbReference type="GO" id="GO:0004438">
    <property type="term" value="F:phosphatidylinositol-3-phosphate phosphatase activity"/>
    <property type="evidence" value="ECO:0000318"/>
    <property type="project" value="GO_Central"/>
</dbReference>
<dbReference type="GO" id="GO:0046856">
    <property type="term" value="P:phosphatidylinositol dephosphorylation"/>
    <property type="evidence" value="ECO:0000318"/>
    <property type="project" value="GO_Central"/>
</dbReference>
<dbReference type="CDD" id="cd13346">
    <property type="entry name" value="PH-GRAM_MTMR10"/>
    <property type="match status" value="1"/>
</dbReference>
<dbReference type="CDD" id="cd14593">
    <property type="entry name" value="PTP-MTMR10"/>
    <property type="match status" value="1"/>
</dbReference>
<dbReference type="Gene3D" id="2.30.29.30">
    <property type="entry name" value="Pleckstrin-homology domain (PH domain)/Phosphotyrosine-binding domain (PTB)"/>
    <property type="match status" value="1"/>
</dbReference>
<dbReference type="InterPro" id="IPR036004">
    <property type="entry name" value="MTMR10_PH-GRAM"/>
</dbReference>
<dbReference type="InterPro" id="IPR030573">
    <property type="entry name" value="MTMR10_PTP"/>
</dbReference>
<dbReference type="InterPro" id="IPR022587">
    <property type="entry name" value="MTMR12-like_C"/>
</dbReference>
<dbReference type="InterPro" id="IPR030564">
    <property type="entry name" value="Myotubularin"/>
</dbReference>
<dbReference type="InterPro" id="IPR010569">
    <property type="entry name" value="Myotubularin-like_Pase_dom"/>
</dbReference>
<dbReference type="InterPro" id="IPR011993">
    <property type="entry name" value="PH-like_dom_sf"/>
</dbReference>
<dbReference type="InterPro" id="IPR029021">
    <property type="entry name" value="Prot-tyrosine_phosphatase-like"/>
</dbReference>
<dbReference type="PANTHER" id="PTHR10807">
    <property type="entry name" value="MYOTUBULARIN-RELATED"/>
    <property type="match status" value="1"/>
</dbReference>
<dbReference type="PANTHER" id="PTHR10807:SF39">
    <property type="entry name" value="MYOTUBULARIN-RELATED PROTEIN 10"/>
    <property type="match status" value="1"/>
</dbReference>
<dbReference type="Pfam" id="PF12578">
    <property type="entry name" value="3-PAP"/>
    <property type="match status" value="1"/>
</dbReference>
<dbReference type="Pfam" id="PF06602">
    <property type="entry name" value="Myotub-related"/>
    <property type="match status" value="2"/>
</dbReference>
<dbReference type="SUPFAM" id="SSF52799">
    <property type="entry name" value="(Phosphotyrosine protein) phosphatases II"/>
    <property type="match status" value="1"/>
</dbReference>
<dbReference type="SUPFAM" id="SSF50729">
    <property type="entry name" value="PH domain-like"/>
    <property type="match status" value="1"/>
</dbReference>
<dbReference type="PROSITE" id="PS51339">
    <property type="entry name" value="PPASE_MYOTUBULARIN"/>
    <property type="match status" value="1"/>
</dbReference>
<accession>Q6NU08</accession>
<accession>Q5XG01</accession>
<organism>
    <name type="scientific">Xenopus laevis</name>
    <name type="common">African clawed frog</name>
    <dbReference type="NCBI Taxonomy" id="8355"/>
    <lineage>
        <taxon>Eukaryota</taxon>
        <taxon>Metazoa</taxon>
        <taxon>Chordata</taxon>
        <taxon>Craniata</taxon>
        <taxon>Vertebrata</taxon>
        <taxon>Euteleostomi</taxon>
        <taxon>Amphibia</taxon>
        <taxon>Batrachia</taxon>
        <taxon>Anura</taxon>
        <taxon>Pipoidea</taxon>
        <taxon>Pipidae</taxon>
        <taxon>Xenopodinae</taxon>
        <taxon>Xenopus</taxon>
        <taxon>Xenopus</taxon>
    </lineage>
</organism>
<gene>
    <name type="primary">mtmr10-b</name>
</gene>
<reference key="1">
    <citation type="submission" date="2004-04" db="EMBL/GenBank/DDBJ databases">
        <authorList>
            <consortium name="NIH - Xenopus Gene Collection (XGC) project"/>
        </authorList>
    </citation>
    <scope>NUCLEOTIDE SEQUENCE [LARGE SCALE MRNA]</scope>
    <source>
        <tissue>Embryo</tissue>
        <tissue>Spleen</tissue>
    </source>
</reference>
<name>MTRAB_XENLA</name>
<comment type="similarity">
    <text evidence="2">Belongs to the protein-tyrosine phosphatase family. Non-receptor class myotubularin subfamily.</text>
</comment>
<comment type="caution">
    <text evidence="2">Although it belongs to the non-receptor class myotubularin subfamily, lacks the conserved active site cysteine residue at position 390 in the dsPTPase catalytic loop, suggesting that it has no phosphatase activity.</text>
</comment>
<keyword id="KW-1185">Reference proteome</keyword>